<evidence type="ECO:0000255" key="1">
    <source>
        <dbReference type="HAMAP-Rule" id="MF_01366"/>
    </source>
</evidence>
<evidence type="ECO:0000305" key="2"/>
<sequence>MRTTYMAKPNDVDRKWYIVDATDVSLGRLASVVASILRGKNKPTFTPNVDTGDNVIVINAEKVALTGRKASNKIYYHHTGFAGGLKSRTAGNFRDENPEKLIETSVQGMLPKNSLGHQMALKLHVYAGADHKHEAQKPEVLDITNLI</sequence>
<accession>Q03PY9</accession>
<protein>
    <recommendedName>
        <fullName evidence="1">Large ribosomal subunit protein uL13</fullName>
    </recommendedName>
    <alternativeName>
        <fullName evidence="2">50S ribosomal protein L13</fullName>
    </alternativeName>
</protein>
<reference key="1">
    <citation type="journal article" date="2006" name="Proc. Natl. Acad. Sci. U.S.A.">
        <title>Comparative genomics of the lactic acid bacteria.</title>
        <authorList>
            <person name="Makarova K.S."/>
            <person name="Slesarev A."/>
            <person name="Wolf Y.I."/>
            <person name="Sorokin A."/>
            <person name="Mirkin B."/>
            <person name="Koonin E.V."/>
            <person name="Pavlov A."/>
            <person name="Pavlova N."/>
            <person name="Karamychev V."/>
            <person name="Polouchine N."/>
            <person name="Shakhova V."/>
            <person name="Grigoriev I."/>
            <person name="Lou Y."/>
            <person name="Rohksar D."/>
            <person name="Lucas S."/>
            <person name="Huang K."/>
            <person name="Goodstein D.M."/>
            <person name="Hawkins T."/>
            <person name="Plengvidhya V."/>
            <person name="Welker D."/>
            <person name="Hughes J."/>
            <person name="Goh Y."/>
            <person name="Benson A."/>
            <person name="Baldwin K."/>
            <person name="Lee J.-H."/>
            <person name="Diaz-Muniz I."/>
            <person name="Dosti B."/>
            <person name="Smeianov V."/>
            <person name="Wechter W."/>
            <person name="Barabote R."/>
            <person name="Lorca G."/>
            <person name="Altermann E."/>
            <person name="Barrangou R."/>
            <person name="Ganesan B."/>
            <person name="Xie Y."/>
            <person name="Rawsthorne H."/>
            <person name="Tamir D."/>
            <person name="Parker C."/>
            <person name="Breidt F."/>
            <person name="Broadbent J.R."/>
            <person name="Hutkins R."/>
            <person name="O'Sullivan D."/>
            <person name="Steele J."/>
            <person name="Unlu G."/>
            <person name="Saier M.H. Jr."/>
            <person name="Klaenhammer T."/>
            <person name="Richardson P."/>
            <person name="Kozyavkin S."/>
            <person name="Weimer B.C."/>
            <person name="Mills D.A."/>
        </authorList>
    </citation>
    <scope>NUCLEOTIDE SEQUENCE [LARGE SCALE GENOMIC DNA]</scope>
    <source>
        <strain>ATCC 367 / BCRC 12310 / CIP 105137 / JCM 1170 / LMG 11437 / NCIMB 947 / NCTC 947</strain>
    </source>
</reference>
<name>RL13_LEVBA</name>
<gene>
    <name evidence="1" type="primary">rplM</name>
    <name type="ordered locus">LVIS_1658</name>
</gene>
<dbReference type="EMBL" id="CP000416">
    <property type="protein sequence ID" value="ABJ64733.1"/>
    <property type="molecule type" value="Genomic_DNA"/>
</dbReference>
<dbReference type="RefSeq" id="WP_011668467.1">
    <property type="nucleotide sequence ID" value="NC_008497.1"/>
</dbReference>
<dbReference type="SMR" id="Q03PY9"/>
<dbReference type="STRING" id="387344.LVIS_1658"/>
<dbReference type="GeneID" id="56993519"/>
<dbReference type="KEGG" id="lbr:LVIS_1658"/>
<dbReference type="eggNOG" id="COG0102">
    <property type="taxonomic scope" value="Bacteria"/>
</dbReference>
<dbReference type="HOGENOM" id="CLU_082184_2_2_9"/>
<dbReference type="Proteomes" id="UP000001652">
    <property type="component" value="Chromosome"/>
</dbReference>
<dbReference type="GO" id="GO:0022625">
    <property type="term" value="C:cytosolic large ribosomal subunit"/>
    <property type="evidence" value="ECO:0007669"/>
    <property type="project" value="TreeGrafter"/>
</dbReference>
<dbReference type="GO" id="GO:0003729">
    <property type="term" value="F:mRNA binding"/>
    <property type="evidence" value="ECO:0007669"/>
    <property type="project" value="TreeGrafter"/>
</dbReference>
<dbReference type="GO" id="GO:0003735">
    <property type="term" value="F:structural constituent of ribosome"/>
    <property type="evidence" value="ECO:0007669"/>
    <property type="project" value="InterPro"/>
</dbReference>
<dbReference type="GO" id="GO:0017148">
    <property type="term" value="P:negative regulation of translation"/>
    <property type="evidence" value="ECO:0007669"/>
    <property type="project" value="TreeGrafter"/>
</dbReference>
<dbReference type="GO" id="GO:0006412">
    <property type="term" value="P:translation"/>
    <property type="evidence" value="ECO:0007669"/>
    <property type="project" value="UniProtKB-UniRule"/>
</dbReference>
<dbReference type="CDD" id="cd00392">
    <property type="entry name" value="Ribosomal_L13"/>
    <property type="match status" value="1"/>
</dbReference>
<dbReference type="FunFam" id="3.90.1180.10:FF:000001">
    <property type="entry name" value="50S ribosomal protein L13"/>
    <property type="match status" value="1"/>
</dbReference>
<dbReference type="Gene3D" id="3.90.1180.10">
    <property type="entry name" value="Ribosomal protein L13"/>
    <property type="match status" value="1"/>
</dbReference>
<dbReference type="HAMAP" id="MF_01366">
    <property type="entry name" value="Ribosomal_uL13"/>
    <property type="match status" value="1"/>
</dbReference>
<dbReference type="InterPro" id="IPR005822">
    <property type="entry name" value="Ribosomal_uL13"/>
</dbReference>
<dbReference type="InterPro" id="IPR005823">
    <property type="entry name" value="Ribosomal_uL13_bac-type"/>
</dbReference>
<dbReference type="InterPro" id="IPR036899">
    <property type="entry name" value="Ribosomal_uL13_sf"/>
</dbReference>
<dbReference type="NCBIfam" id="TIGR01066">
    <property type="entry name" value="rplM_bact"/>
    <property type="match status" value="1"/>
</dbReference>
<dbReference type="PANTHER" id="PTHR11545:SF2">
    <property type="entry name" value="LARGE RIBOSOMAL SUBUNIT PROTEIN UL13M"/>
    <property type="match status" value="1"/>
</dbReference>
<dbReference type="PANTHER" id="PTHR11545">
    <property type="entry name" value="RIBOSOMAL PROTEIN L13"/>
    <property type="match status" value="1"/>
</dbReference>
<dbReference type="Pfam" id="PF00572">
    <property type="entry name" value="Ribosomal_L13"/>
    <property type="match status" value="1"/>
</dbReference>
<dbReference type="PIRSF" id="PIRSF002181">
    <property type="entry name" value="Ribosomal_L13"/>
    <property type="match status" value="1"/>
</dbReference>
<dbReference type="SUPFAM" id="SSF52161">
    <property type="entry name" value="Ribosomal protein L13"/>
    <property type="match status" value="1"/>
</dbReference>
<proteinExistence type="inferred from homology"/>
<feature type="chain" id="PRO_1000055397" description="Large ribosomal subunit protein uL13">
    <location>
        <begin position="1"/>
        <end position="147"/>
    </location>
</feature>
<organism>
    <name type="scientific">Levilactobacillus brevis (strain ATCC 367 / BCRC 12310 / CIP 105137 / JCM 1170 / LMG 11437 / NCIMB 947 / NCTC 947)</name>
    <name type="common">Lactobacillus brevis</name>
    <dbReference type="NCBI Taxonomy" id="387344"/>
    <lineage>
        <taxon>Bacteria</taxon>
        <taxon>Bacillati</taxon>
        <taxon>Bacillota</taxon>
        <taxon>Bacilli</taxon>
        <taxon>Lactobacillales</taxon>
        <taxon>Lactobacillaceae</taxon>
        <taxon>Levilactobacillus</taxon>
    </lineage>
</organism>
<keyword id="KW-1185">Reference proteome</keyword>
<keyword id="KW-0687">Ribonucleoprotein</keyword>
<keyword id="KW-0689">Ribosomal protein</keyword>
<comment type="function">
    <text evidence="1">This protein is one of the early assembly proteins of the 50S ribosomal subunit, although it is not seen to bind rRNA by itself. It is important during the early stages of 50S assembly.</text>
</comment>
<comment type="subunit">
    <text evidence="1">Part of the 50S ribosomal subunit.</text>
</comment>
<comment type="similarity">
    <text evidence="1">Belongs to the universal ribosomal protein uL13 family.</text>
</comment>